<protein>
    <recommendedName>
        <fullName>Probable sulfate permease C869.05c</fullName>
    </recommendedName>
</protein>
<keyword id="KW-0472">Membrane</keyword>
<keyword id="KW-0597">Phosphoprotein</keyword>
<keyword id="KW-1185">Reference proteome</keyword>
<keyword id="KW-0812">Transmembrane</keyword>
<keyword id="KW-1133">Transmembrane helix</keyword>
<keyword id="KW-0813">Transport</keyword>
<accession>Q9URY8</accession>
<dbReference type="EMBL" id="CU329670">
    <property type="protein sequence ID" value="CAB60015.1"/>
    <property type="molecule type" value="Genomic_DNA"/>
</dbReference>
<dbReference type="PIR" id="T39116">
    <property type="entry name" value="T39116"/>
</dbReference>
<dbReference type="SMR" id="Q9URY8"/>
<dbReference type="BioGRID" id="279562">
    <property type="interactions" value="13"/>
</dbReference>
<dbReference type="FunCoup" id="Q9URY8">
    <property type="interactions" value="41"/>
</dbReference>
<dbReference type="STRING" id="284812.Q9URY8"/>
<dbReference type="iPTMnet" id="Q9URY8"/>
<dbReference type="PaxDb" id="4896-SPAC869.05c.1"/>
<dbReference type="EnsemblFungi" id="SPAC869.05c.1">
    <property type="protein sequence ID" value="SPAC869.05c.1:pep"/>
    <property type="gene ID" value="SPAC869.05c"/>
</dbReference>
<dbReference type="KEGG" id="spo:2543130"/>
<dbReference type="PomBase" id="SPAC869.05c"/>
<dbReference type="VEuPathDB" id="FungiDB:SPAC869.05c"/>
<dbReference type="eggNOG" id="KOG0236">
    <property type="taxonomic scope" value="Eukaryota"/>
</dbReference>
<dbReference type="HOGENOM" id="CLU_003182_8_1_1"/>
<dbReference type="InParanoid" id="Q9URY8"/>
<dbReference type="OMA" id="WVMTFIF"/>
<dbReference type="PhylomeDB" id="Q9URY8"/>
<dbReference type="Reactome" id="R-SPO-174362">
    <property type="pathway name" value="Transport and synthesis of PAPS"/>
</dbReference>
<dbReference type="Reactome" id="R-SPO-427601">
    <property type="pathway name" value="Multifunctional anion exchangers"/>
</dbReference>
<dbReference type="PRO" id="PR:Q9URY8"/>
<dbReference type="Proteomes" id="UP000002485">
    <property type="component" value="Chromosome I"/>
</dbReference>
<dbReference type="GO" id="GO:0005886">
    <property type="term" value="C:plasma membrane"/>
    <property type="evidence" value="ECO:0000318"/>
    <property type="project" value="GO_Central"/>
</dbReference>
<dbReference type="GO" id="GO:0015116">
    <property type="term" value="F:sulfate transmembrane transporter activity"/>
    <property type="evidence" value="ECO:0000269"/>
    <property type="project" value="PomBase"/>
</dbReference>
<dbReference type="GO" id="GO:1902476">
    <property type="term" value="P:chloride transmembrane transport"/>
    <property type="evidence" value="ECO:0000318"/>
    <property type="project" value="GO_Central"/>
</dbReference>
<dbReference type="GO" id="GO:1902434">
    <property type="term" value="P:sulfate import across plasma membrane"/>
    <property type="evidence" value="ECO:0000269"/>
    <property type="project" value="PomBase"/>
</dbReference>
<dbReference type="GO" id="GO:1902358">
    <property type="term" value="P:sulfate transmembrane transport"/>
    <property type="evidence" value="ECO:0000318"/>
    <property type="project" value="GO_Central"/>
</dbReference>
<dbReference type="CDD" id="cd07042">
    <property type="entry name" value="STAS_SulP_like_sulfate_transporter"/>
    <property type="match status" value="1"/>
</dbReference>
<dbReference type="FunFam" id="3.30.750.24:FF:000046">
    <property type="entry name" value="Solute carrier family 26 (Sodium-independent sulfate anion transporter), member 11"/>
    <property type="match status" value="1"/>
</dbReference>
<dbReference type="Gene3D" id="3.30.750.24">
    <property type="entry name" value="STAS domain"/>
    <property type="match status" value="1"/>
</dbReference>
<dbReference type="InterPro" id="IPR011547">
    <property type="entry name" value="SLC26A/SulP_dom"/>
</dbReference>
<dbReference type="InterPro" id="IPR001902">
    <property type="entry name" value="SLC26A/SulP_fam"/>
</dbReference>
<dbReference type="InterPro" id="IPR002645">
    <property type="entry name" value="STAS_dom"/>
</dbReference>
<dbReference type="InterPro" id="IPR036513">
    <property type="entry name" value="STAS_dom_sf"/>
</dbReference>
<dbReference type="NCBIfam" id="TIGR00815">
    <property type="entry name" value="sulP"/>
    <property type="match status" value="1"/>
</dbReference>
<dbReference type="PANTHER" id="PTHR11814">
    <property type="entry name" value="SULFATE TRANSPORTER"/>
    <property type="match status" value="1"/>
</dbReference>
<dbReference type="Pfam" id="PF01740">
    <property type="entry name" value="STAS"/>
    <property type="match status" value="1"/>
</dbReference>
<dbReference type="Pfam" id="PF00916">
    <property type="entry name" value="Sulfate_transp"/>
    <property type="match status" value="1"/>
</dbReference>
<dbReference type="SUPFAM" id="SSF52091">
    <property type="entry name" value="SpoIIaa-like"/>
    <property type="match status" value="1"/>
</dbReference>
<dbReference type="PROSITE" id="PS50801">
    <property type="entry name" value="STAS"/>
    <property type="match status" value="1"/>
</dbReference>
<feature type="chain" id="PRO_0000080187" description="Probable sulfate permease C869.05c">
    <location>
        <begin position="1"/>
        <end position="840"/>
    </location>
</feature>
<feature type="transmembrane region" description="Helical" evidence="2">
    <location>
        <begin position="120"/>
        <end position="140"/>
    </location>
</feature>
<feature type="transmembrane region" description="Helical" evidence="2">
    <location>
        <begin position="148"/>
        <end position="168"/>
    </location>
</feature>
<feature type="transmembrane region" description="Helical" evidence="2">
    <location>
        <begin position="173"/>
        <end position="193"/>
    </location>
</feature>
<feature type="transmembrane region" description="Helical" evidence="2">
    <location>
        <begin position="208"/>
        <end position="228"/>
    </location>
</feature>
<feature type="transmembrane region" description="Helical" evidence="2">
    <location>
        <begin position="230"/>
        <end position="250"/>
    </location>
</feature>
<feature type="transmembrane region" description="Helical" evidence="2">
    <location>
        <begin position="278"/>
        <end position="298"/>
    </location>
</feature>
<feature type="transmembrane region" description="Helical" evidence="2">
    <location>
        <begin position="315"/>
        <end position="335"/>
    </location>
</feature>
<feature type="transmembrane region" description="Helical" evidence="2">
    <location>
        <begin position="410"/>
        <end position="430"/>
    </location>
</feature>
<feature type="transmembrane region" description="Helical" evidence="2">
    <location>
        <begin position="447"/>
        <end position="467"/>
    </location>
</feature>
<feature type="transmembrane region" description="Helical" evidence="2">
    <location>
        <begin position="470"/>
        <end position="490"/>
    </location>
</feature>
<feature type="transmembrane region" description="Helical" evidence="2">
    <location>
        <begin position="505"/>
        <end position="525"/>
    </location>
</feature>
<feature type="transmembrane region" description="Helical" evidence="2">
    <location>
        <begin position="527"/>
        <end position="547"/>
    </location>
</feature>
<feature type="domain" description="STAS" evidence="3">
    <location>
        <begin position="578"/>
        <end position="733"/>
    </location>
</feature>
<feature type="modified residue" description="Phosphoserine" evidence="4">
    <location>
        <position position="823"/>
    </location>
</feature>
<reference key="1">
    <citation type="journal article" date="2002" name="Nature">
        <title>The genome sequence of Schizosaccharomyces pombe.</title>
        <authorList>
            <person name="Wood V."/>
            <person name="Gwilliam R."/>
            <person name="Rajandream M.A."/>
            <person name="Lyne M.H."/>
            <person name="Lyne R."/>
            <person name="Stewart A."/>
            <person name="Sgouros J.G."/>
            <person name="Peat N."/>
            <person name="Hayles J."/>
            <person name="Baker S.G."/>
            <person name="Basham D."/>
            <person name="Bowman S."/>
            <person name="Brooks K."/>
            <person name="Brown D."/>
            <person name="Brown S."/>
            <person name="Chillingworth T."/>
            <person name="Churcher C.M."/>
            <person name="Collins M."/>
            <person name="Connor R."/>
            <person name="Cronin A."/>
            <person name="Davis P."/>
            <person name="Feltwell T."/>
            <person name="Fraser A."/>
            <person name="Gentles S."/>
            <person name="Goble A."/>
            <person name="Hamlin N."/>
            <person name="Harris D.E."/>
            <person name="Hidalgo J."/>
            <person name="Hodgson G."/>
            <person name="Holroyd S."/>
            <person name="Hornsby T."/>
            <person name="Howarth S."/>
            <person name="Huckle E.J."/>
            <person name="Hunt S."/>
            <person name="Jagels K."/>
            <person name="James K.D."/>
            <person name="Jones L."/>
            <person name="Jones M."/>
            <person name="Leather S."/>
            <person name="McDonald S."/>
            <person name="McLean J."/>
            <person name="Mooney P."/>
            <person name="Moule S."/>
            <person name="Mungall K.L."/>
            <person name="Murphy L.D."/>
            <person name="Niblett D."/>
            <person name="Odell C."/>
            <person name="Oliver K."/>
            <person name="O'Neil S."/>
            <person name="Pearson D."/>
            <person name="Quail M.A."/>
            <person name="Rabbinowitsch E."/>
            <person name="Rutherford K.M."/>
            <person name="Rutter S."/>
            <person name="Saunders D."/>
            <person name="Seeger K."/>
            <person name="Sharp S."/>
            <person name="Skelton J."/>
            <person name="Simmonds M.N."/>
            <person name="Squares R."/>
            <person name="Squares S."/>
            <person name="Stevens K."/>
            <person name="Taylor K."/>
            <person name="Taylor R.G."/>
            <person name="Tivey A."/>
            <person name="Walsh S.V."/>
            <person name="Warren T."/>
            <person name="Whitehead S."/>
            <person name="Woodward J.R."/>
            <person name="Volckaert G."/>
            <person name="Aert R."/>
            <person name="Robben J."/>
            <person name="Grymonprez B."/>
            <person name="Weltjens I."/>
            <person name="Vanstreels E."/>
            <person name="Rieger M."/>
            <person name="Schaefer M."/>
            <person name="Mueller-Auer S."/>
            <person name="Gabel C."/>
            <person name="Fuchs M."/>
            <person name="Duesterhoeft A."/>
            <person name="Fritzc C."/>
            <person name="Holzer E."/>
            <person name="Moestl D."/>
            <person name="Hilbert H."/>
            <person name="Borzym K."/>
            <person name="Langer I."/>
            <person name="Beck A."/>
            <person name="Lehrach H."/>
            <person name="Reinhardt R."/>
            <person name="Pohl T.M."/>
            <person name="Eger P."/>
            <person name="Zimmermann W."/>
            <person name="Wedler H."/>
            <person name="Wambutt R."/>
            <person name="Purnelle B."/>
            <person name="Goffeau A."/>
            <person name="Cadieu E."/>
            <person name="Dreano S."/>
            <person name="Gloux S."/>
            <person name="Lelaure V."/>
            <person name="Mottier S."/>
            <person name="Galibert F."/>
            <person name="Aves S.J."/>
            <person name="Xiang Z."/>
            <person name="Hunt C."/>
            <person name="Moore K."/>
            <person name="Hurst S.M."/>
            <person name="Lucas M."/>
            <person name="Rochet M."/>
            <person name="Gaillardin C."/>
            <person name="Tallada V.A."/>
            <person name="Garzon A."/>
            <person name="Thode G."/>
            <person name="Daga R.R."/>
            <person name="Cruzado L."/>
            <person name="Jimenez J."/>
            <person name="Sanchez M."/>
            <person name="del Rey F."/>
            <person name="Benito J."/>
            <person name="Dominguez A."/>
            <person name="Revuelta J.L."/>
            <person name="Moreno S."/>
            <person name="Armstrong J."/>
            <person name="Forsburg S.L."/>
            <person name="Cerutti L."/>
            <person name="Lowe T."/>
            <person name="McCombie W.R."/>
            <person name="Paulsen I."/>
            <person name="Potashkin J."/>
            <person name="Shpakovski G.V."/>
            <person name="Ussery D."/>
            <person name="Barrell B.G."/>
            <person name="Nurse P."/>
        </authorList>
    </citation>
    <scope>NUCLEOTIDE SEQUENCE [LARGE SCALE GENOMIC DNA]</scope>
    <source>
        <strain>972 / ATCC 24843</strain>
    </source>
</reference>
<reference key="2">
    <citation type="journal article" date="2008" name="J. Proteome Res.">
        <title>Phosphoproteome analysis of fission yeast.</title>
        <authorList>
            <person name="Wilson-Grady J.T."/>
            <person name="Villen J."/>
            <person name="Gygi S.P."/>
        </authorList>
    </citation>
    <scope>PHOSPHORYLATION [LARGE SCALE ANALYSIS] AT SER-823</scope>
    <scope>IDENTIFICATION BY MASS SPECTROMETRY</scope>
</reference>
<name>SULH2_SCHPO</name>
<comment type="function">
    <text evidence="1">High affinity uptake of sulfate into the cell.</text>
</comment>
<comment type="subcellular location">
    <subcellularLocation>
        <location evidence="5">Membrane</location>
        <topology evidence="5">Multi-pass membrane protein</topology>
    </subcellularLocation>
</comment>
<comment type="similarity">
    <text evidence="5">Belongs to the SLC26A/SulP transporter (TC 2.A.53) family.</text>
</comment>
<proteinExistence type="evidence at protein level"/>
<evidence type="ECO:0000250" key="1"/>
<evidence type="ECO:0000255" key="2"/>
<evidence type="ECO:0000255" key="3">
    <source>
        <dbReference type="PROSITE-ProRule" id="PRU00198"/>
    </source>
</evidence>
<evidence type="ECO:0000269" key="4">
    <source>
    </source>
</evidence>
<evidence type="ECO:0000305" key="5"/>
<sequence length="840" mass="93518">MRAWGWVRNKFSSEDDYNDGASNKDYPDRFNEFDNSQNDHNDYTQNNAQFQNAQTTTFGRTISRVKAYYEIPEDDELDELASIPQWFKKNVTSNIFKNFLHYLKSLFPIIEWLPNYNPYWLINDLIAGITVGCVVVPQGMSYAKVATLPSEYGLYSSFVGVAIYCFFATSKDVSIGPVAVMSLITAKVIANVMAKDETYTAPQIATCLALLAGAITCGIGLLRLGFIIEFIPVPAVAGFTTGSALNILSGQVPALMGYKNKVTAKATYMVIIQSLKHLPDTTVDAAFGLVSLFILFFTKYMCQYLGKRYPRWQQAFFLTNTLRSAVVVIVGTAISYAICKHHRSDPPISIIKTVPRGFQHVGVPLITKKLCRDLASELPVSVIVLLLEHISIAKSFGRVNDYRIVPDQELIAMGVTNLIGIFFNAYPATGSFSRSAIKAKAGVKTPIAGIFTAAVVILSLYCLTDAFYYIPNAILSAVIIHAVTDLILPMKQTILFWRLQPLEACIFFISVIVSVFSSIENGIYVSVCLAAALLLLRIAKPHGSFLGKIQAANKYGSDNIANVRDIYVPLEMKEENPNLEIQSPPPGVFIFRLQESFTYPNASRVSTMISRRIKDLTRRGIDNIYVKDIDRPWNVPRQRKKKENSEIEDLRPLLQAIIFDFSAVNNLDTTAVQSLIDIRKELEIYANETVEFHFTNIRSGWIKRTLVAAGFGKPKGHAVDASVCVEVAAPLRDANLSAESSRNLSRIITPIYDDEEGNVSGHIYELDGKNNSDLSMHCQKGSNQVEIEFVEFNSRKYPFFHVDVASAVVDLQHRLLSPQKSDSFGSLKEGGTTTIKKIEN</sequence>
<organism>
    <name type="scientific">Schizosaccharomyces pombe (strain 972 / ATCC 24843)</name>
    <name type="common">Fission yeast</name>
    <dbReference type="NCBI Taxonomy" id="284812"/>
    <lineage>
        <taxon>Eukaryota</taxon>
        <taxon>Fungi</taxon>
        <taxon>Dikarya</taxon>
        <taxon>Ascomycota</taxon>
        <taxon>Taphrinomycotina</taxon>
        <taxon>Schizosaccharomycetes</taxon>
        <taxon>Schizosaccharomycetales</taxon>
        <taxon>Schizosaccharomycetaceae</taxon>
        <taxon>Schizosaccharomyces</taxon>
    </lineage>
</organism>
<gene>
    <name type="ORF">SPAC869.05c</name>
</gene>